<feature type="chain" id="PRO_0000356501" description="Large ribosomal subunit protein bL33A">
    <location>
        <begin position="1"/>
        <end position="48"/>
    </location>
</feature>
<organism>
    <name type="scientific">Limosilactobacillus fermentum (strain NBRC 3956 / LMG 18251)</name>
    <name type="common">Lactobacillus fermentum</name>
    <dbReference type="NCBI Taxonomy" id="334390"/>
    <lineage>
        <taxon>Bacteria</taxon>
        <taxon>Bacillati</taxon>
        <taxon>Bacillota</taxon>
        <taxon>Bacilli</taxon>
        <taxon>Lactobacillales</taxon>
        <taxon>Lactobacillaceae</taxon>
        <taxon>Limosilactobacillus</taxon>
    </lineage>
</organism>
<reference key="1">
    <citation type="journal article" date="2008" name="DNA Res.">
        <title>Comparative genome analysis of Lactobacillus reuteri and Lactobacillus fermentum reveal a genomic island for reuterin and cobalamin production.</title>
        <authorList>
            <person name="Morita H."/>
            <person name="Toh H."/>
            <person name="Fukuda S."/>
            <person name="Horikawa H."/>
            <person name="Oshima K."/>
            <person name="Suzuki T."/>
            <person name="Murakami M."/>
            <person name="Hisamatsu S."/>
            <person name="Kato Y."/>
            <person name="Takizawa T."/>
            <person name="Fukuoka H."/>
            <person name="Yoshimura T."/>
            <person name="Itoh K."/>
            <person name="O'Sullivan D.J."/>
            <person name="McKay L.L."/>
            <person name="Ohno H."/>
            <person name="Kikuchi J."/>
            <person name="Masaoka T."/>
            <person name="Hattori M."/>
        </authorList>
    </citation>
    <scope>NUCLEOTIDE SEQUENCE [LARGE SCALE GENOMIC DNA]</scope>
    <source>
        <strain>NBRC 3956 / LMG 18251</strain>
    </source>
</reference>
<accession>B2GAB9</accession>
<comment type="similarity">
    <text evidence="1">Belongs to the bacterial ribosomal protein bL33 family.</text>
</comment>
<gene>
    <name evidence="1" type="primary">rpmG1</name>
    <name type="ordered locus">LAF_0265</name>
</gene>
<sequence length="48" mass="5655">MVKKVALECSECGRRNYSVPARPNHEERLELKKFCKHCGKVTVHRETR</sequence>
<evidence type="ECO:0000255" key="1">
    <source>
        <dbReference type="HAMAP-Rule" id="MF_00294"/>
    </source>
</evidence>
<keyword id="KW-1185">Reference proteome</keyword>
<keyword id="KW-0687">Ribonucleoprotein</keyword>
<keyword id="KW-0689">Ribosomal protein</keyword>
<name>RL331_LIMF3</name>
<proteinExistence type="inferred from homology"/>
<dbReference type="EMBL" id="AP008937">
    <property type="protein sequence ID" value="BAG26601.1"/>
    <property type="molecule type" value="Genomic_DNA"/>
</dbReference>
<dbReference type="SMR" id="B2GAB9"/>
<dbReference type="KEGG" id="lfe:LAF_0265"/>
<dbReference type="eggNOG" id="COG0267">
    <property type="taxonomic scope" value="Bacteria"/>
</dbReference>
<dbReference type="HOGENOM" id="CLU_190949_0_2_9"/>
<dbReference type="Proteomes" id="UP000001697">
    <property type="component" value="Chromosome"/>
</dbReference>
<dbReference type="GO" id="GO:0005737">
    <property type="term" value="C:cytoplasm"/>
    <property type="evidence" value="ECO:0007669"/>
    <property type="project" value="UniProtKB-ARBA"/>
</dbReference>
<dbReference type="GO" id="GO:1990904">
    <property type="term" value="C:ribonucleoprotein complex"/>
    <property type="evidence" value="ECO:0007669"/>
    <property type="project" value="UniProtKB-KW"/>
</dbReference>
<dbReference type="GO" id="GO:0005840">
    <property type="term" value="C:ribosome"/>
    <property type="evidence" value="ECO:0007669"/>
    <property type="project" value="UniProtKB-KW"/>
</dbReference>
<dbReference type="GO" id="GO:0003735">
    <property type="term" value="F:structural constituent of ribosome"/>
    <property type="evidence" value="ECO:0007669"/>
    <property type="project" value="InterPro"/>
</dbReference>
<dbReference type="GO" id="GO:0006412">
    <property type="term" value="P:translation"/>
    <property type="evidence" value="ECO:0007669"/>
    <property type="project" value="UniProtKB-UniRule"/>
</dbReference>
<dbReference type="Gene3D" id="2.20.28.120">
    <property type="entry name" value="Ribosomal protein L33"/>
    <property type="match status" value="1"/>
</dbReference>
<dbReference type="HAMAP" id="MF_00294">
    <property type="entry name" value="Ribosomal_bL33"/>
    <property type="match status" value="1"/>
</dbReference>
<dbReference type="InterPro" id="IPR001705">
    <property type="entry name" value="Ribosomal_bL33"/>
</dbReference>
<dbReference type="InterPro" id="IPR038584">
    <property type="entry name" value="Ribosomal_bL33_sf"/>
</dbReference>
<dbReference type="InterPro" id="IPR011332">
    <property type="entry name" value="Ribosomal_zn-bd"/>
</dbReference>
<dbReference type="NCBIfam" id="NF001764">
    <property type="entry name" value="PRK00504.1"/>
    <property type="match status" value="1"/>
</dbReference>
<dbReference type="NCBIfam" id="TIGR01023">
    <property type="entry name" value="rpmG_bact"/>
    <property type="match status" value="1"/>
</dbReference>
<dbReference type="Pfam" id="PF00471">
    <property type="entry name" value="Ribosomal_L33"/>
    <property type="match status" value="1"/>
</dbReference>
<dbReference type="SUPFAM" id="SSF57829">
    <property type="entry name" value="Zn-binding ribosomal proteins"/>
    <property type="match status" value="1"/>
</dbReference>
<protein>
    <recommendedName>
        <fullName evidence="1">Large ribosomal subunit protein bL33A</fullName>
    </recommendedName>
    <alternativeName>
        <fullName evidence="1">50S ribosomal protein L33 1</fullName>
    </alternativeName>
</protein>